<accession>Q5WT85</accession>
<gene>
    <name evidence="1" type="primary">rplT</name>
    <name type="ordered locus">lpl2640</name>
</gene>
<name>RL20_LEGPL</name>
<sequence>MPRVKRGVTAKARHKKILDQAKGYYGARSRTYRVAKQAVIKAGQYAYRDRRQKKRQFRALWITRINAQARECGLSYSRLIDGLKKASIELDRKILADMAVHDKVAFAAIAEQAKAALAG</sequence>
<organism>
    <name type="scientific">Legionella pneumophila (strain Lens)</name>
    <dbReference type="NCBI Taxonomy" id="297245"/>
    <lineage>
        <taxon>Bacteria</taxon>
        <taxon>Pseudomonadati</taxon>
        <taxon>Pseudomonadota</taxon>
        <taxon>Gammaproteobacteria</taxon>
        <taxon>Legionellales</taxon>
        <taxon>Legionellaceae</taxon>
        <taxon>Legionella</taxon>
    </lineage>
</organism>
<feature type="chain" id="PRO_0000243694" description="Large ribosomal subunit protein bL20">
    <location>
        <begin position="1"/>
        <end position="119"/>
    </location>
</feature>
<protein>
    <recommendedName>
        <fullName evidence="1">Large ribosomal subunit protein bL20</fullName>
    </recommendedName>
    <alternativeName>
        <fullName evidence="2">50S ribosomal protein L20</fullName>
    </alternativeName>
</protein>
<keyword id="KW-0687">Ribonucleoprotein</keyword>
<keyword id="KW-0689">Ribosomal protein</keyword>
<keyword id="KW-0694">RNA-binding</keyword>
<keyword id="KW-0699">rRNA-binding</keyword>
<comment type="function">
    <text evidence="1">Binds directly to 23S ribosomal RNA and is necessary for the in vitro assembly process of the 50S ribosomal subunit. It is not involved in the protein synthesizing functions of that subunit.</text>
</comment>
<comment type="similarity">
    <text evidence="1">Belongs to the bacterial ribosomal protein bL20 family.</text>
</comment>
<dbReference type="EMBL" id="CR628337">
    <property type="protein sequence ID" value="CAH16881.1"/>
    <property type="molecule type" value="Genomic_DNA"/>
</dbReference>
<dbReference type="RefSeq" id="WP_010948412.1">
    <property type="nucleotide sequence ID" value="NC_006369.1"/>
</dbReference>
<dbReference type="SMR" id="Q5WT85"/>
<dbReference type="GeneID" id="57036713"/>
<dbReference type="KEGG" id="lpf:lpl2640"/>
<dbReference type="LegioList" id="lpl2640"/>
<dbReference type="HOGENOM" id="CLU_123265_0_1_6"/>
<dbReference type="Proteomes" id="UP000002517">
    <property type="component" value="Chromosome"/>
</dbReference>
<dbReference type="GO" id="GO:1990904">
    <property type="term" value="C:ribonucleoprotein complex"/>
    <property type="evidence" value="ECO:0007669"/>
    <property type="project" value="UniProtKB-KW"/>
</dbReference>
<dbReference type="GO" id="GO:0005840">
    <property type="term" value="C:ribosome"/>
    <property type="evidence" value="ECO:0007669"/>
    <property type="project" value="UniProtKB-KW"/>
</dbReference>
<dbReference type="GO" id="GO:0019843">
    <property type="term" value="F:rRNA binding"/>
    <property type="evidence" value="ECO:0007669"/>
    <property type="project" value="UniProtKB-UniRule"/>
</dbReference>
<dbReference type="GO" id="GO:0003735">
    <property type="term" value="F:structural constituent of ribosome"/>
    <property type="evidence" value="ECO:0007669"/>
    <property type="project" value="InterPro"/>
</dbReference>
<dbReference type="GO" id="GO:0000027">
    <property type="term" value="P:ribosomal large subunit assembly"/>
    <property type="evidence" value="ECO:0007669"/>
    <property type="project" value="UniProtKB-UniRule"/>
</dbReference>
<dbReference type="GO" id="GO:0006412">
    <property type="term" value="P:translation"/>
    <property type="evidence" value="ECO:0007669"/>
    <property type="project" value="InterPro"/>
</dbReference>
<dbReference type="CDD" id="cd07026">
    <property type="entry name" value="Ribosomal_L20"/>
    <property type="match status" value="1"/>
</dbReference>
<dbReference type="FunFam" id="1.10.1900.20:FF:000001">
    <property type="entry name" value="50S ribosomal protein L20"/>
    <property type="match status" value="1"/>
</dbReference>
<dbReference type="Gene3D" id="6.10.160.10">
    <property type="match status" value="1"/>
</dbReference>
<dbReference type="Gene3D" id="1.10.1900.20">
    <property type="entry name" value="Ribosomal protein L20"/>
    <property type="match status" value="1"/>
</dbReference>
<dbReference type="HAMAP" id="MF_00382">
    <property type="entry name" value="Ribosomal_bL20"/>
    <property type="match status" value="1"/>
</dbReference>
<dbReference type="InterPro" id="IPR005813">
    <property type="entry name" value="Ribosomal_bL20"/>
</dbReference>
<dbReference type="InterPro" id="IPR049946">
    <property type="entry name" value="RIBOSOMAL_L20_CS"/>
</dbReference>
<dbReference type="InterPro" id="IPR035566">
    <property type="entry name" value="Ribosomal_protein_bL20_C"/>
</dbReference>
<dbReference type="NCBIfam" id="TIGR01032">
    <property type="entry name" value="rplT_bact"/>
    <property type="match status" value="1"/>
</dbReference>
<dbReference type="PANTHER" id="PTHR10986">
    <property type="entry name" value="39S RIBOSOMAL PROTEIN L20"/>
    <property type="match status" value="1"/>
</dbReference>
<dbReference type="Pfam" id="PF00453">
    <property type="entry name" value="Ribosomal_L20"/>
    <property type="match status" value="1"/>
</dbReference>
<dbReference type="PRINTS" id="PR00062">
    <property type="entry name" value="RIBOSOMALL20"/>
</dbReference>
<dbReference type="SUPFAM" id="SSF74731">
    <property type="entry name" value="Ribosomal protein L20"/>
    <property type="match status" value="1"/>
</dbReference>
<dbReference type="PROSITE" id="PS00937">
    <property type="entry name" value="RIBOSOMAL_L20"/>
    <property type="match status" value="1"/>
</dbReference>
<reference key="1">
    <citation type="journal article" date="2004" name="Nat. Genet.">
        <title>Evidence in the Legionella pneumophila genome for exploitation of host cell functions and high genome plasticity.</title>
        <authorList>
            <person name="Cazalet C."/>
            <person name="Rusniok C."/>
            <person name="Brueggemann H."/>
            <person name="Zidane N."/>
            <person name="Magnier A."/>
            <person name="Ma L."/>
            <person name="Tichit M."/>
            <person name="Jarraud S."/>
            <person name="Bouchier C."/>
            <person name="Vandenesch F."/>
            <person name="Kunst F."/>
            <person name="Etienne J."/>
            <person name="Glaser P."/>
            <person name="Buchrieser C."/>
        </authorList>
    </citation>
    <scope>NUCLEOTIDE SEQUENCE [LARGE SCALE GENOMIC DNA]</scope>
    <source>
        <strain>Lens</strain>
    </source>
</reference>
<proteinExistence type="inferred from homology"/>
<evidence type="ECO:0000255" key="1">
    <source>
        <dbReference type="HAMAP-Rule" id="MF_00382"/>
    </source>
</evidence>
<evidence type="ECO:0000305" key="2"/>